<sequence length="363" mass="40167">MKKTALYAWHEAAGAKIIDFGGYLMPVQYSGIIAEHTCVRTSAGLFDVSHMGNFMVKGRGAKAFLQHMTSNDVDKLSDGQAQYTLLLYPEGGIVDDLIIYRIDADTWFMVVNASNMEKDYSWLQEHLGSFEGVQLENHTEELSLIALQGPRSMEILDRVFTGGECSGIKPFHFRTVPFNGREVIVAATGYTGERGVEISVPNDAATALWVALMEAGSADGIQPIGLGARDTLRLEMGYPLYGHEINRETSPIEARLKWVTRLDKGNFVGRESCVAVDINPQRTVVGFMMHERAIPRQGFTVYNRDRKPLGSVCSGTMSPTLKQPIGTADVPRGYMKSGTPLYLEVRGKFYKGEVVKLPFVNRA</sequence>
<proteinExistence type="inferred from homology"/>
<keyword id="KW-0032">Aminotransferase</keyword>
<keyword id="KW-0808">Transferase</keyword>
<accession>B4S437</accession>
<comment type="function">
    <text evidence="1">The glycine cleavage system catalyzes the degradation of glycine.</text>
</comment>
<comment type="catalytic activity">
    <reaction evidence="1">
        <text>N(6)-[(R)-S(8)-aminomethyldihydrolipoyl]-L-lysyl-[protein] + (6S)-5,6,7,8-tetrahydrofolate = N(6)-[(R)-dihydrolipoyl]-L-lysyl-[protein] + (6R)-5,10-methylene-5,6,7,8-tetrahydrofolate + NH4(+)</text>
        <dbReference type="Rhea" id="RHEA:16945"/>
        <dbReference type="Rhea" id="RHEA-COMP:10475"/>
        <dbReference type="Rhea" id="RHEA-COMP:10492"/>
        <dbReference type="ChEBI" id="CHEBI:15636"/>
        <dbReference type="ChEBI" id="CHEBI:28938"/>
        <dbReference type="ChEBI" id="CHEBI:57453"/>
        <dbReference type="ChEBI" id="CHEBI:83100"/>
        <dbReference type="ChEBI" id="CHEBI:83143"/>
        <dbReference type="EC" id="2.1.2.10"/>
    </reaction>
</comment>
<comment type="subunit">
    <text evidence="1">The glycine cleavage system is composed of four proteins: P, T, L and H.</text>
</comment>
<comment type="similarity">
    <text evidence="1">Belongs to the GcvT family.</text>
</comment>
<evidence type="ECO:0000255" key="1">
    <source>
        <dbReference type="HAMAP-Rule" id="MF_00259"/>
    </source>
</evidence>
<gene>
    <name evidence="1" type="primary">gcvT</name>
    <name type="ordered locus">Paes_1817</name>
</gene>
<organism>
    <name type="scientific">Prosthecochloris aestuarii (strain DSM 271 / SK 413)</name>
    <dbReference type="NCBI Taxonomy" id="290512"/>
    <lineage>
        <taxon>Bacteria</taxon>
        <taxon>Pseudomonadati</taxon>
        <taxon>Chlorobiota</taxon>
        <taxon>Chlorobiia</taxon>
        <taxon>Chlorobiales</taxon>
        <taxon>Chlorobiaceae</taxon>
        <taxon>Prosthecochloris</taxon>
    </lineage>
</organism>
<name>GCST_PROA2</name>
<feature type="chain" id="PRO_1000114103" description="Aminomethyltransferase">
    <location>
        <begin position="1"/>
        <end position="363"/>
    </location>
</feature>
<dbReference type="EC" id="2.1.2.10" evidence="1"/>
<dbReference type="EMBL" id="CP001108">
    <property type="protein sequence ID" value="ACF46829.1"/>
    <property type="molecule type" value="Genomic_DNA"/>
</dbReference>
<dbReference type="RefSeq" id="WP_012506362.1">
    <property type="nucleotide sequence ID" value="NC_011059.1"/>
</dbReference>
<dbReference type="SMR" id="B4S437"/>
<dbReference type="STRING" id="290512.Paes_1817"/>
<dbReference type="KEGG" id="paa:Paes_1817"/>
<dbReference type="eggNOG" id="COG0404">
    <property type="taxonomic scope" value="Bacteria"/>
</dbReference>
<dbReference type="HOGENOM" id="CLU_007884_10_2_10"/>
<dbReference type="Proteomes" id="UP000002725">
    <property type="component" value="Chromosome"/>
</dbReference>
<dbReference type="GO" id="GO:0005829">
    <property type="term" value="C:cytosol"/>
    <property type="evidence" value="ECO:0007669"/>
    <property type="project" value="TreeGrafter"/>
</dbReference>
<dbReference type="GO" id="GO:0005960">
    <property type="term" value="C:glycine cleavage complex"/>
    <property type="evidence" value="ECO:0007669"/>
    <property type="project" value="InterPro"/>
</dbReference>
<dbReference type="GO" id="GO:0004047">
    <property type="term" value="F:aminomethyltransferase activity"/>
    <property type="evidence" value="ECO:0007669"/>
    <property type="project" value="UniProtKB-UniRule"/>
</dbReference>
<dbReference type="GO" id="GO:0008483">
    <property type="term" value="F:transaminase activity"/>
    <property type="evidence" value="ECO:0007669"/>
    <property type="project" value="UniProtKB-KW"/>
</dbReference>
<dbReference type="GO" id="GO:0019464">
    <property type="term" value="P:glycine decarboxylation via glycine cleavage system"/>
    <property type="evidence" value="ECO:0007669"/>
    <property type="project" value="UniProtKB-UniRule"/>
</dbReference>
<dbReference type="FunFam" id="3.30.70.1400:FF:000001">
    <property type="entry name" value="Aminomethyltransferase"/>
    <property type="match status" value="1"/>
</dbReference>
<dbReference type="Gene3D" id="2.40.30.110">
    <property type="entry name" value="Aminomethyltransferase beta-barrel domains"/>
    <property type="match status" value="1"/>
</dbReference>
<dbReference type="Gene3D" id="3.30.70.1400">
    <property type="entry name" value="Aminomethyltransferase beta-barrel domains"/>
    <property type="match status" value="1"/>
</dbReference>
<dbReference type="Gene3D" id="4.10.1250.10">
    <property type="entry name" value="Aminomethyltransferase fragment"/>
    <property type="match status" value="1"/>
</dbReference>
<dbReference type="Gene3D" id="3.30.1360.120">
    <property type="entry name" value="Probable tRNA modification gtpase trme, domain 1"/>
    <property type="match status" value="1"/>
</dbReference>
<dbReference type="HAMAP" id="MF_00259">
    <property type="entry name" value="GcvT"/>
    <property type="match status" value="1"/>
</dbReference>
<dbReference type="InterPro" id="IPR006223">
    <property type="entry name" value="GCS_T"/>
</dbReference>
<dbReference type="InterPro" id="IPR022903">
    <property type="entry name" value="GCS_T_bac"/>
</dbReference>
<dbReference type="InterPro" id="IPR013977">
    <property type="entry name" value="GCST_C"/>
</dbReference>
<dbReference type="InterPro" id="IPR006222">
    <property type="entry name" value="GCV_T_N"/>
</dbReference>
<dbReference type="InterPro" id="IPR028896">
    <property type="entry name" value="GcvT/YgfZ/DmdA"/>
</dbReference>
<dbReference type="InterPro" id="IPR029043">
    <property type="entry name" value="GcvT/YgfZ_C"/>
</dbReference>
<dbReference type="InterPro" id="IPR027266">
    <property type="entry name" value="TrmE/GcvT_dom1"/>
</dbReference>
<dbReference type="NCBIfam" id="TIGR00528">
    <property type="entry name" value="gcvT"/>
    <property type="match status" value="1"/>
</dbReference>
<dbReference type="NCBIfam" id="NF001567">
    <property type="entry name" value="PRK00389.1"/>
    <property type="match status" value="1"/>
</dbReference>
<dbReference type="PANTHER" id="PTHR43757">
    <property type="entry name" value="AMINOMETHYLTRANSFERASE"/>
    <property type="match status" value="1"/>
</dbReference>
<dbReference type="PANTHER" id="PTHR43757:SF2">
    <property type="entry name" value="AMINOMETHYLTRANSFERASE, MITOCHONDRIAL"/>
    <property type="match status" value="1"/>
</dbReference>
<dbReference type="Pfam" id="PF01571">
    <property type="entry name" value="GCV_T"/>
    <property type="match status" value="1"/>
</dbReference>
<dbReference type="Pfam" id="PF08669">
    <property type="entry name" value="GCV_T_C"/>
    <property type="match status" value="1"/>
</dbReference>
<dbReference type="PIRSF" id="PIRSF006487">
    <property type="entry name" value="GcvT"/>
    <property type="match status" value="1"/>
</dbReference>
<dbReference type="SUPFAM" id="SSF101790">
    <property type="entry name" value="Aminomethyltransferase beta-barrel domain"/>
    <property type="match status" value="1"/>
</dbReference>
<dbReference type="SUPFAM" id="SSF103025">
    <property type="entry name" value="Folate-binding domain"/>
    <property type="match status" value="1"/>
</dbReference>
<protein>
    <recommendedName>
        <fullName evidence="1">Aminomethyltransferase</fullName>
        <ecNumber evidence="1">2.1.2.10</ecNumber>
    </recommendedName>
    <alternativeName>
        <fullName evidence="1">Glycine cleavage system T protein</fullName>
    </alternativeName>
</protein>
<reference key="1">
    <citation type="submission" date="2008-06" db="EMBL/GenBank/DDBJ databases">
        <title>Complete sequence of chromosome of Prosthecochloris aestuarii DSM 271.</title>
        <authorList>
            <consortium name="US DOE Joint Genome Institute"/>
            <person name="Lucas S."/>
            <person name="Copeland A."/>
            <person name="Lapidus A."/>
            <person name="Glavina del Rio T."/>
            <person name="Dalin E."/>
            <person name="Tice H."/>
            <person name="Bruce D."/>
            <person name="Goodwin L."/>
            <person name="Pitluck S."/>
            <person name="Schmutz J."/>
            <person name="Larimer F."/>
            <person name="Land M."/>
            <person name="Hauser L."/>
            <person name="Kyrpides N."/>
            <person name="Anderson I."/>
            <person name="Liu Z."/>
            <person name="Li T."/>
            <person name="Zhao F."/>
            <person name="Overmann J."/>
            <person name="Bryant D.A."/>
            <person name="Richardson P."/>
        </authorList>
    </citation>
    <scope>NUCLEOTIDE SEQUENCE [LARGE SCALE GENOMIC DNA]</scope>
    <source>
        <strain>DSM 271 / SK 413</strain>
    </source>
</reference>